<keyword id="KW-0067">ATP-binding</keyword>
<keyword id="KW-0460">Magnesium</keyword>
<keyword id="KW-0547">Nucleotide-binding</keyword>
<keyword id="KW-0808">Transferase</keyword>
<keyword id="KW-0819">tRNA processing</keyword>
<evidence type="ECO:0000255" key="1">
    <source>
        <dbReference type="HAMAP-Rule" id="MF_00185"/>
    </source>
</evidence>
<comment type="function">
    <text evidence="1">Catalyzes the transfer of a dimethylallyl group onto the adenine at position 37 in tRNAs that read codons beginning with uridine, leading to the formation of N6-(dimethylallyl)adenosine (i(6)A).</text>
</comment>
<comment type="catalytic activity">
    <reaction evidence="1">
        <text>adenosine(37) in tRNA + dimethylallyl diphosphate = N(6)-dimethylallyladenosine(37) in tRNA + diphosphate</text>
        <dbReference type="Rhea" id="RHEA:26482"/>
        <dbReference type="Rhea" id="RHEA-COMP:10162"/>
        <dbReference type="Rhea" id="RHEA-COMP:10375"/>
        <dbReference type="ChEBI" id="CHEBI:33019"/>
        <dbReference type="ChEBI" id="CHEBI:57623"/>
        <dbReference type="ChEBI" id="CHEBI:74411"/>
        <dbReference type="ChEBI" id="CHEBI:74415"/>
        <dbReference type="EC" id="2.5.1.75"/>
    </reaction>
</comment>
<comment type="cofactor">
    <cofactor evidence="1">
        <name>Mg(2+)</name>
        <dbReference type="ChEBI" id="CHEBI:18420"/>
    </cofactor>
</comment>
<comment type="subunit">
    <text evidence="1">Monomer.</text>
</comment>
<comment type="similarity">
    <text evidence="1">Belongs to the IPP transferase family.</text>
</comment>
<protein>
    <recommendedName>
        <fullName evidence="1">tRNA dimethylallyltransferase</fullName>
        <ecNumber evidence="1">2.5.1.75</ecNumber>
    </recommendedName>
    <alternativeName>
        <fullName evidence="1">Dimethylallyl diphosphate:tRNA dimethylallyltransferase</fullName>
        <shortName evidence="1">DMAPP:tRNA dimethylallyltransferase</shortName>
        <shortName evidence="1">DMATase</shortName>
    </alternativeName>
    <alternativeName>
        <fullName evidence="1">Isopentenyl-diphosphate:tRNA isopentenyltransferase</fullName>
        <shortName evidence="1">IPP transferase</shortName>
        <shortName evidence="1">IPPT</shortName>
        <shortName evidence="1">IPTase</shortName>
    </alternativeName>
</protein>
<proteinExistence type="inferred from homology"/>
<reference key="1">
    <citation type="submission" date="2007-05" db="EMBL/GenBank/DDBJ databases">
        <title>Complete sequence of chromosome of Staphylococcus aureus subsp. aureus JH9.</title>
        <authorList>
            <consortium name="US DOE Joint Genome Institute"/>
            <person name="Copeland A."/>
            <person name="Lucas S."/>
            <person name="Lapidus A."/>
            <person name="Barry K."/>
            <person name="Detter J.C."/>
            <person name="Glavina del Rio T."/>
            <person name="Hammon N."/>
            <person name="Israni S."/>
            <person name="Pitluck S."/>
            <person name="Chain P."/>
            <person name="Malfatti S."/>
            <person name="Shin M."/>
            <person name="Vergez L."/>
            <person name="Schmutz J."/>
            <person name="Larimer F."/>
            <person name="Land M."/>
            <person name="Hauser L."/>
            <person name="Kyrpides N."/>
            <person name="Kim E."/>
            <person name="Tomasz A."/>
            <person name="Richardson P."/>
        </authorList>
    </citation>
    <scope>NUCLEOTIDE SEQUENCE [LARGE SCALE GENOMIC DNA]</scope>
    <source>
        <strain>JH9</strain>
    </source>
</reference>
<feature type="chain" id="PRO_1000077405" description="tRNA dimethylallyltransferase">
    <location>
        <begin position="1"/>
        <end position="311"/>
    </location>
</feature>
<feature type="region of interest" description="Interaction with substrate tRNA" evidence="1">
    <location>
        <begin position="38"/>
        <end position="41"/>
    </location>
</feature>
<feature type="region of interest" description="Interaction with substrate tRNA" evidence="1">
    <location>
        <begin position="166"/>
        <end position="170"/>
    </location>
</feature>
<feature type="binding site" evidence="1">
    <location>
        <begin position="13"/>
        <end position="20"/>
    </location>
    <ligand>
        <name>ATP</name>
        <dbReference type="ChEBI" id="CHEBI:30616"/>
    </ligand>
</feature>
<feature type="binding site" evidence="1">
    <location>
        <begin position="15"/>
        <end position="20"/>
    </location>
    <ligand>
        <name>substrate</name>
    </ligand>
</feature>
<feature type="site" description="Interaction with substrate tRNA" evidence="1">
    <location>
        <position position="104"/>
    </location>
</feature>
<gene>
    <name evidence="1" type="primary">miaA</name>
    <name type="ordered locus">SaurJH9_1362</name>
</gene>
<dbReference type="EC" id="2.5.1.75" evidence="1"/>
<dbReference type="EMBL" id="CP000703">
    <property type="protein sequence ID" value="ABQ49158.1"/>
    <property type="molecule type" value="Genomic_DNA"/>
</dbReference>
<dbReference type="RefSeq" id="WP_001548613.1">
    <property type="nucleotide sequence ID" value="NC_009487.1"/>
</dbReference>
<dbReference type="SMR" id="A5ISI5"/>
<dbReference type="KEGG" id="saj:SaurJH9_1362"/>
<dbReference type="HOGENOM" id="CLU_032616_0_1_9"/>
<dbReference type="GO" id="GO:0005524">
    <property type="term" value="F:ATP binding"/>
    <property type="evidence" value="ECO:0007669"/>
    <property type="project" value="UniProtKB-UniRule"/>
</dbReference>
<dbReference type="GO" id="GO:0052381">
    <property type="term" value="F:tRNA dimethylallyltransferase activity"/>
    <property type="evidence" value="ECO:0007669"/>
    <property type="project" value="UniProtKB-UniRule"/>
</dbReference>
<dbReference type="GO" id="GO:0006400">
    <property type="term" value="P:tRNA modification"/>
    <property type="evidence" value="ECO:0007669"/>
    <property type="project" value="TreeGrafter"/>
</dbReference>
<dbReference type="FunFam" id="1.10.20.140:FF:000004">
    <property type="entry name" value="tRNA dimethylallyltransferase"/>
    <property type="match status" value="1"/>
</dbReference>
<dbReference type="Gene3D" id="1.10.20.140">
    <property type="match status" value="1"/>
</dbReference>
<dbReference type="Gene3D" id="3.40.50.300">
    <property type="entry name" value="P-loop containing nucleotide triphosphate hydrolases"/>
    <property type="match status" value="1"/>
</dbReference>
<dbReference type="HAMAP" id="MF_00185">
    <property type="entry name" value="IPP_trans"/>
    <property type="match status" value="1"/>
</dbReference>
<dbReference type="InterPro" id="IPR039657">
    <property type="entry name" value="Dimethylallyltransferase"/>
</dbReference>
<dbReference type="InterPro" id="IPR018022">
    <property type="entry name" value="IPT"/>
</dbReference>
<dbReference type="InterPro" id="IPR027417">
    <property type="entry name" value="P-loop_NTPase"/>
</dbReference>
<dbReference type="NCBIfam" id="TIGR00174">
    <property type="entry name" value="miaA"/>
    <property type="match status" value="1"/>
</dbReference>
<dbReference type="PANTHER" id="PTHR11088">
    <property type="entry name" value="TRNA DIMETHYLALLYLTRANSFERASE"/>
    <property type="match status" value="1"/>
</dbReference>
<dbReference type="PANTHER" id="PTHR11088:SF60">
    <property type="entry name" value="TRNA DIMETHYLALLYLTRANSFERASE"/>
    <property type="match status" value="1"/>
</dbReference>
<dbReference type="Pfam" id="PF01715">
    <property type="entry name" value="IPPT"/>
    <property type="match status" value="1"/>
</dbReference>
<dbReference type="SUPFAM" id="SSF52540">
    <property type="entry name" value="P-loop containing nucleoside triphosphate hydrolases"/>
    <property type="match status" value="2"/>
</dbReference>
<name>MIAA_STAA9</name>
<sequence length="311" mass="35868">MNKNKPFIVVIVGPTASGKTELSIELAKRINGEIISGDSMQVYKHMNIGTAKVTPEEMDGIPHHLIDILNPDDTFSAYEFKRLAEDLITDITNRGKVPIIAGGTGLYIQSLIYNYELEDETVTPAQLSIVKQKLSALEHLDNQQLHDYLAQFDAVSAENIHPNNRQRVLRAIEYYLKTKKLLSNRKKVQQFTENYDTLLLGIEMSRKTLYSRINKRVDIMLDHGLFREVQQLVEQGYESCQSMQAIGYKELIPVINGQMIYEDAVNDLKQHSRQYAKRQMTWFKNKMSVHWLDKENMSLQMMLDEITTQIK</sequence>
<organism>
    <name type="scientific">Staphylococcus aureus (strain JH9)</name>
    <dbReference type="NCBI Taxonomy" id="359786"/>
    <lineage>
        <taxon>Bacteria</taxon>
        <taxon>Bacillati</taxon>
        <taxon>Bacillota</taxon>
        <taxon>Bacilli</taxon>
        <taxon>Bacillales</taxon>
        <taxon>Staphylococcaceae</taxon>
        <taxon>Staphylococcus</taxon>
    </lineage>
</organism>
<accession>A5ISI5</accession>